<protein>
    <recommendedName>
        <fullName evidence="1">Protoheme IX farnesyltransferase</fullName>
        <ecNumber evidence="1">2.5.1.141</ecNumber>
    </recommendedName>
    <alternativeName>
        <fullName evidence="1">Heme B farnesyltransferase</fullName>
    </alternativeName>
    <alternativeName>
        <fullName evidence="1">Heme O synthase</fullName>
    </alternativeName>
</protein>
<proteinExistence type="inferred from homology"/>
<gene>
    <name evidence="1" type="primary">ctaB</name>
    <name type="ordered locus">BCQ_3733</name>
</gene>
<sequence>MNHATSELHDESAVTSVPETTRLQDLKALVKMGIVNSNTLTVFTGFWLALHFNGLSVMDNLDKLFFTIVGSGLVMAGVCCLNNYIDRDIDPLMERTKTRPTVTGKYKPGFALTFGLVILLLGFVFLLLTTPMAVLMGFIGAFTYVVLYSLWTKRKYTLNTVVGSISGAVPPLIGWAAIDPSLGHPIAWMLFLIMFIWQIPHFLALAMKRVDEYRNAGIPMLPVVHGFEITKRQIMIWTVCLLPLPFYMSGLGITFMVIATLLNIGWIVLGFYGFRKKDDIKWSVQMFVYSLNYLTILFVSMIVVTFF</sequence>
<feature type="chain" id="PRO_1000199644" description="Protoheme IX farnesyltransferase">
    <location>
        <begin position="1"/>
        <end position="307"/>
    </location>
</feature>
<feature type="transmembrane region" description="Helical" evidence="1">
    <location>
        <begin position="32"/>
        <end position="52"/>
    </location>
</feature>
<feature type="transmembrane region" description="Helical" evidence="1">
    <location>
        <begin position="65"/>
        <end position="85"/>
    </location>
</feature>
<feature type="transmembrane region" description="Helical" evidence="1">
    <location>
        <begin position="108"/>
        <end position="128"/>
    </location>
</feature>
<feature type="transmembrane region" description="Helical" evidence="1">
    <location>
        <begin position="131"/>
        <end position="151"/>
    </location>
</feature>
<feature type="transmembrane region" description="Helical" evidence="1">
    <location>
        <begin position="158"/>
        <end position="178"/>
    </location>
</feature>
<feature type="transmembrane region" description="Helical" evidence="1">
    <location>
        <begin position="186"/>
        <end position="206"/>
    </location>
</feature>
<feature type="transmembrane region" description="Helical" evidence="1">
    <location>
        <begin position="251"/>
        <end position="271"/>
    </location>
</feature>
<feature type="transmembrane region" description="Helical" evidence="1">
    <location>
        <begin position="287"/>
        <end position="307"/>
    </location>
</feature>
<accession>B9IW24</accession>
<evidence type="ECO:0000255" key="1">
    <source>
        <dbReference type="HAMAP-Rule" id="MF_00154"/>
    </source>
</evidence>
<name>COXX_BACCQ</name>
<comment type="function">
    <text evidence="1">Converts heme B (protoheme IX) to heme O by substitution of the vinyl group on carbon 2 of heme B porphyrin ring with a hydroxyethyl farnesyl side group.</text>
</comment>
<comment type="catalytic activity">
    <reaction evidence="1">
        <text>heme b + (2E,6E)-farnesyl diphosphate + H2O = Fe(II)-heme o + diphosphate</text>
        <dbReference type="Rhea" id="RHEA:28070"/>
        <dbReference type="ChEBI" id="CHEBI:15377"/>
        <dbReference type="ChEBI" id="CHEBI:33019"/>
        <dbReference type="ChEBI" id="CHEBI:60344"/>
        <dbReference type="ChEBI" id="CHEBI:60530"/>
        <dbReference type="ChEBI" id="CHEBI:175763"/>
        <dbReference type="EC" id="2.5.1.141"/>
    </reaction>
</comment>
<comment type="pathway">
    <text evidence="1">Porphyrin-containing compound metabolism; heme O biosynthesis; heme O from protoheme: step 1/1.</text>
</comment>
<comment type="subunit">
    <text evidence="1">Interacts with CtaA.</text>
</comment>
<comment type="subcellular location">
    <subcellularLocation>
        <location evidence="1">Cell membrane</location>
        <topology evidence="1">Multi-pass membrane protein</topology>
    </subcellularLocation>
</comment>
<comment type="miscellaneous">
    <text evidence="1">Carbon 2 of the heme B porphyrin ring is defined according to the Fischer nomenclature.</text>
</comment>
<comment type="similarity">
    <text evidence="1">Belongs to the UbiA prenyltransferase family. Protoheme IX farnesyltransferase subfamily.</text>
</comment>
<reference key="1">
    <citation type="journal article" date="2009" name="J. Bacteriol.">
        <title>Complete genome sequence of the extremophilic Bacillus cereus strain Q1 with industrial applications.</title>
        <authorList>
            <person name="Xiong Z."/>
            <person name="Jiang Y."/>
            <person name="Qi D."/>
            <person name="Lu H."/>
            <person name="Yang F."/>
            <person name="Yang J."/>
            <person name="Chen L."/>
            <person name="Sun L."/>
            <person name="Xu X."/>
            <person name="Xue Y."/>
            <person name="Zhu Y."/>
            <person name="Jin Q."/>
        </authorList>
    </citation>
    <scope>NUCLEOTIDE SEQUENCE [LARGE SCALE GENOMIC DNA]</scope>
    <source>
        <strain>Q1</strain>
    </source>
</reference>
<dbReference type="EC" id="2.5.1.141" evidence="1"/>
<dbReference type="EMBL" id="CP000227">
    <property type="protein sequence ID" value="ACM14161.1"/>
    <property type="molecule type" value="Genomic_DNA"/>
</dbReference>
<dbReference type="SMR" id="B9IW24"/>
<dbReference type="KEGG" id="bcq:BCQ_3733"/>
<dbReference type="HOGENOM" id="CLU_029631_0_0_9"/>
<dbReference type="UniPathway" id="UPA00834">
    <property type="reaction ID" value="UER00712"/>
</dbReference>
<dbReference type="Proteomes" id="UP000000441">
    <property type="component" value="Chromosome"/>
</dbReference>
<dbReference type="GO" id="GO:0005886">
    <property type="term" value="C:plasma membrane"/>
    <property type="evidence" value="ECO:0007669"/>
    <property type="project" value="UniProtKB-SubCell"/>
</dbReference>
<dbReference type="GO" id="GO:0008495">
    <property type="term" value="F:protoheme IX farnesyltransferase activity"/>
    <property type="evidence" value="ECO:0007669"/>
    <property type="project" value="UniProtKB-UniRule"/>
</dbReference>
<dbReference type="GO" id="GO:0048034">
    <property type="term" value="P:heme O biosynthetic process"/>
    <property type="evidence" value="ECO:0007669"/>
    <property type="project" value="UniProtKB-UniRule"/>
</dbReference>
<dbReference type="CDD" id="cd13957">
    <property type="entry name" value="PT_UbiA_Cox10"/>
    <property type="match status" value="1"/>
</dbReference>
<dbReference type="FunFam" id="1.10.357.140:FF:000001">
    <property type="entry name" value="Protoheme IX farnesyltransferase"/>
    <property type="match status" value="1"/>
</dbReference>
<dbReference type="Gene3D" id="1.10.357.140">
    <property type="entry name" value="UbiA prenyltransferase"/>
    <property type="match status" value="1"/>
</dbReference>
<dbReference type="HAMAP" id="MF_00154">
    <property type="entry name" value="CyoE_CtaB"/>
    <property type="match status" value="1"/>
</dbReference>
<dbReference type="InterPro" id="IPR006369">
    <property type="entry name" value="Protohaem_IX_farnesylTrfase"/>
</dbReference>
<dbReference type="InterPro" id="IPR000537">
    <property type="entry name" value="UbiA_prenyltransferase"/>
</dbReference>
<dbReference type="InterPro" id="IPR030470">
    <property type="entry name" value="UbiA_prenylTrfase_CS"/>
</dbReference>
<dbReference type="InterPro" id="IPR044878">
    <property type="entry name" value="UbiA_sf"/>
</dbReference>
<dbReference type="NCBIfam" id="TIGR01473">
    <property type="entry name" value="cyoE_ctaB"/>
    <property type="match status" value="1"/>
</dbReference>
<dbReference type="PANTHER" id="PTHR43448">
    <property type="entry name" value="PROTOHEME IX FARNESYLTRANSFERASE, MITOCHONDRIAL"/>
    <property type="match status" value="1"/>
</dbReference>
<dbReference type="PANTHER" id="PTHR43448:SF2">
    <property type="entry name" value="PROTOHEME IX FARNESYLTRANSFERASE, MITOCHONDRIAL"/>
    <property type="match status" value="1"/>
</dbReference>
<dbReference type="Pfam" id="PF01040">
    <property type="entry name" value="UbiA"/>
    <property type="match status" value="1"/>
</dbReference>
<dbReference type="PROSITE" id="PS00943">
    <property type="entry name" value="UBIA"/>
    <property type="match status" value="1"/>
</dbReference>
<organism>
    <name type="scientific">Bacillus cereus (strain Q1)</name>
    <dbReference type="NCBI Taxonomy" id="361100"/>
    <lineage>
        <taxon>Bacteria</taxon>
        <taxon>Bacillati</taxon>
        <taxon>Bacillota</taxon>
        <taxon>Bacilli</taxon>
        <taxon>Bacillales</taxon>
        <taxon>Bacillaceae</taxon>
        <taxon>Bacillus</taxon>
        <taxon>Bacillus cereus group</taxon>
    </lineage>
</organism>
<keyword id="KW-1003">Cell membrane</keyword>
<keyword id="KW-0350">Heme biosynthesis</keyword>
<keyword id="KW-0472">Membrane</keyword>
<keyword id="KW-0808">Transferase</keyword>
<keyword id="KW-0812">Transmembrane</keyword>
<keyword id="KW-1133">Transmembrane helix</keyword>